<feature type="chain" id="PRO_0000400425" description="Transcriptional regulator CtsR">
    <location>
        <begin position="1"/>
        <end position="155"/>
    </location>
</feature>
<comment type="function">
    <text evidence="2">Binds to the ftsH promoter region, leading to repression of its expression.</text>
</comment>
<comment type="subunit">
    <text evidence="1">Homodimer.</text>
</comment>
<comment type="disruption phenotype">
    <text evidence="2">Disruption leads to increased expression of ftsH, indicating CtsR is a transcriptional repressor.</text>
</comment>
<comment type="similarity">
    <text evidence="3">Belongs to the CtsR family.</text>
</comment>
<evidence type="ECO:0000250" key="1"/>
<evidence type="ECO:0000269" key="2">
    <source>
    </source>
</evidence>
<evidence type="ECO:0000305" key="3"/>
<dbReference type="EMBL" id="AL935263">
    <property type="protein sequence ID" value="CCC78434.1"/>
    <property type="molecule type" value="Genomic_DNA"/>
</dbReference>
<dbReference type="RefSeq" id="WP_003644086.1">
    <property type="nucleotide sequence ID" value="NC_004567.2"/>
</dbReference>
<dbReference type="RefSeq" id="YP_004888948.1">
    <property type="nucleotide sequence ID" value="NC_004567.2"/>
</dbReference>
<dbReference type="SMR" id="Q88XZ6"/>
<dbReference type="STRING" id="220668.lp_1018"/>
<dbReference type="EnsemblBacteria" id="CCC78434">
    <property type="protein sequence ID" value="CCC78434"/>
    <property type="gene ID" value="lp_1018"/>
</dbReference>
<dbReference type="KEGG" id="lpl:lp_1018"/>
<dbReference type="PATRIC" id="fig|220668.9.peg.860"/>
<dbReference type="eggNOG" id="COG4463">
    <property type="taxonomic scope" value="Bacteria"/>
</dbReference>
<dbReference type="HOGENOM" id="CLU_118139_0_0_9"/>
<dbReference type="OrthoDB" id="1680813at2"/>
<dbReference type="PhylomeDB" id="Q88XZ6"/>
<dbReference type="Proteomes" id="UP000000432">
    <property type="component" value="Chromosome"/>
</dbReference>
<dbReference type="GO" id="GO:0003677">
    <property type="term" value="F:DNA binding"/>
    <property type="evidence" value="ECO:0007669"/>
    <property type="project" value="UniProtKB-KW"/>
</dbReference>
<dbReference type="GO" id="GO:0006355">
    <property type="term" value="P:regulation of DNA-templated transcription"/>
    <property type="evidence" value="ECO:0007669"/>
    <property type="project" value="InterPro"/>
</dbReference>
<dbReference type="Gene3D" id="1.10.1200.150">
    <property type="entry name" value="Transcriptional regulator CtsR, C-terminal domain"/>
    <property type="match status" value="1"/>
</dbReference>
<dbReference type="Gene3D" id="3.30.56.130">
    <property type="entry name" value="Transcriptional regulator CtsR, winged HTH domain"/>
    <property type="match status" value="1"/>
</dbReference>
<dbReference type="InterPro" id="IPR008463">
    <property type="entry name" value="CtsR"/>
</dbReference>
<dbReference type="InterPro" id="IPR041473">
    <property type="entry name" value="CtsR_C"/>
</dbReference>
<dbReference type="InterPro" id="IPR041908">
    <property type="entry name" value="CtsR_C_sf"/>
</dbReference>
<dbReference type="InterPro" id="IPR040465">
    <property type="entry name" value="CtsR_N"/>
</dbReference>
<dbReference type="InterPro" id="IPR041902">
    <property type="entry name" value="CtsR_N_sf"/>
</dbReference>
<dbReference type="Pfam" id="PF05848">
    <property type="entry name" value="CtsR"/>
    <property type="match status" value="1"/>
</dbReference>
<dbReference type="Pfam" id="PF17727">
    <property type="entry name" value="CtsR_C"/>
    <property type="match status" value="1"/>
</dbReference>
<dbReference type="PIRSF" id="PIRSF010607">
    <property type="entry name" value="Txn_repr_CtsR"/>
    <property type="match status" value="1"/>
</dbReference>
<keyword id="KW-0238">DNA-binding</keyword>
<keyword id="KW-1185">Reference proteome</keyword>
<keyword id="KW-0678">Repressor</keyword>
<keyword id="KW-0804">Transcription</keyword>
<keyword id="KW-0805">Transcription regulation</keyword>
<reference key="1">
    <citation type="journal article" date="2003" name="Proc. Natl. Acad. Sci. U.S.A.">
        <title>Complete genome sequence of Lactobacillus plantarum WCFS1.</title>
        <authorList>
            <person name="Kleerebezem M."/>
            <person name="Boekhorst J."/>
            <person name="van Kranenburg R."/>
            <person name="Molenaar D."/>
            <person name="Kuipers O.P."/>
            <person name="Leer R."/>
            <person name="Tarchini R."/>
            <person name="Peters S.A."/>
            <person name="Sandbrink H.M."/>
            <person name="Fiers M.W.E.J."/>
            <person name="Stiekema W."/>
            <person name="Klein Lankhorst R.M."/>
            <person name="Bron P.A."/>
            <person name="Hoffer S.M."/>
            <person name="Nierop Groot M.N."/>
            <person name="Kerkhoven R."/>
            <person name="De Vries M."/>
            <person name="Ursing B."/>
            <person name="De Vos W.M."/>
            <person name="Siezen R.J."/>
        </authorList>
    </citation>
    <scope>NUCLEOTIDE SEQUENCE [LARGE SCALE GENOMIC DNA]</scope>
    <source>
        <strain>ATCC BAA-793 / NCIMB 8826 / WCFS1</strain>
    </source>
</reference>
<reference key="2">
    <citation type="journal article" date="2012" name="J. Bacteriol.">
        <title>Complete resequencing and reannotation of the Lactobacillus plantarum WCFS1 genome.</title>
        <authorList>
            <person name="Siezen R.J."/>
            <person name="Francke C."/>
            <person name="Renckens B."/>
            <person name="Boekhorst J."/>
            <person name="Wels M."/>
            <person name="Kleerebezem M."/>
            <person name="van Hijum S.A."/>
        </authorList>
    </citation>
    <scope>NUCLEOTIDE SEQUENCE [LARGE SCALE GENOMIC DNA]</scope>
    <scope>GENOME REANNOTATION</scope>
    <source>
        <strain>ATCC BAA-793 / NCIMB 8826 / WCFS1</strain>
    </source>
</reference>
<reference key="3">
    <citation type="journal article" date="2009" name="J. Bacteriol.">
        <title>The Lactobacillus plantarum ftsH gene is a novel member of the CtsR stress response regulon.</title>
        <authorList>
            <person name="Fiocco D."/>
            <person name="Collins M."/>
            <person name="Muscariello L."/>
            <person name="Hols P."/>
            <person name="Kleerebezem M."/>
            <person name="Msadek T."/>
            <person name="Spano G."/>
        </authorList>
    </citation>
    <scope>FUNCTION</scope>
    <scope>DNA-BINDING</scope>
    <scope>DISRUPTION PHENOTYPE</scope>
    <source>
        <strain>ATCC BAA-793 / NCIMB 8826 / WCFS1</strain>
    </source>
</reference>
<name>CTSR_LACPL</name>
<accession>Q88XZ6</accession>
<accession>F9UMJ5</accession>
<gene>
    <name type="primary">ctsR</name>
    <name type="ordered locus">lp_1018</name>
</gene>
<proteinExistence type="evidence at protein level"/>
<organism>
    <name type="scientific">Lactiplantibacillus plantarum (strain ATCC BAA-793 / NCIMB 8826 / WCFS1)</name>
    <name type="common">Lactobacillus plantarum</name>
    <dbReference type="NCBI Taxonomy" id="220668"/>
    <lineage>
        <taxon>Bacteria</taxon>
        <taxon>Bacillati</taxon>
        <taxon>Bacillota</taxon>
        <taxon>Bacilli</taxon>
        <taxon>Lactobacillales</taxon>
        <taxon>Lactobacillaceae</taxon>
        <taxon>Lactiplantibacillus</taxon>
    </lineage>
</organism>
<sequence>MQSQNISDIIEKYLKSILADSEHVEIRRSEIADLFNVVPSQINYVIKTRFTIQNGYLVESKRGGGGYIRIEKVNLVDDADVLDALIQVIGDSITQRDAYAVVQSLYEDDVLNRREAQLILVAIDHETLGLTDRDLENSLRARIIIGILNHLRYES</sequence>
<protein>
    <recommendedName>
        <fullName>Transcriptional regulator CtsR</fullName>
    </recommendedName>
    <alternativeName>
        <fullName>Class three stress gene repressor</fullName>
    </alternativeName>
</protein>